<evidence type="ECO:0000250" key="1"/>
<evidence type="ECO:0000305" key="2"/>
<sequence>MDEVKYPVLTEKSIRLLERNQYTFNVDSQLNKTKMKIWIEHFFDVKVIAMNSYRLPEKGGKGGSMIGHPIRCKRMIITLKPGDSIPLFSEQ</sequence>
<organism>
    <name type="scientific">Picea abies</name>
    <name type="common">Norway spruce</name>
    <name type="synonym">Picea excelsa</name>
    <dbReference type="NCBI Taxonomy" id="3329"/>
    <lineage>
        <taxon>Eukaryota</taxon>
        <taxon>Viridiplantae</taxon>
        <taxon>Streptophyta</taxon>
        <taxon>Embryophyta</taxon>
        <taxon>Tracheophyta</taxon>
        <taxon>Spermatophyta</taxon>
        <taxon>Pinopsida</taxon>
        <taxon>Pinidae</taxon>
        <taxon>Conifers I</taxon>
        <taxon>Pinales</taxon>
        <taxon>Pinaceae</taxon>
        <taxon>Picea</taxon>
    </lineage>
</organism>
<gene>
    <name type="primary">rpl23</name>
</gene>
<dbReference type="EMBL" id="U92462">
    <property type="protein sequence ID" value="AAC95507.1"/>
    <property type="molecule type" value="Genomic_DNA"/>
</dbReference>
<dbReference type="PIR" id="T11817">
    <property type="entry name" value="T11817"/>
</dbReference>
<dbReference type="SMR" id="O62961"/>
<dbReference type="GO" id="GO:0009507">
    <property type="term" value="C:chloroplast"/>
    <property type="evidence" value="ECO:0007669"/>
    <property type="project" value="UniProtKB-SubCell"/>
</dbReference>
<dbReference type="GO" id="GO:1990904">
    <property type="term" value="C:ribonucleoprotein complex"/>
    <property type="evidence" value="ECO:0007669"/>
    <property type="project" value="UniProtKB-KW"/>
</dbReference>
<dbReference type="GO" id="GO:0005840">
    <property type="term" value="C:ribosome"/>
    <property type="evidence" value="ECO:0007669"/>
    <property type="project" value="UniProtKB-KW"/>
</dbReference>
<dbReference type="GO" id="GO:0019843">
    <property type="term" value="F:rRNA binding"/>
    <property type="evidence" value="ECO:0007669"/>
    <property type="project" value="UniProtKB-UniRule"/>
</dbReference>
<dbReference type="GO" id="GO:0003735">
    <property type="term" value="F:structural constituent of ribosome"/>
    <property type="evidence" value="ECO:0007669"/>
    <property type="project" value="InterPro"/>
</dbReference>
<dbReference type="GO" id="GO:0006412">
    <property type="term" value="P:translation"/>
    <property type="evidence" value="ECO:0007669"/>
    <property type="project" value="UniProtKB-UniRule"/>
</dbReference>
<dbReference type="Gene3D" id="3.30.70.330">
    <property type="match status" value="1"/>
</dbReference>
<dbReference type="HAMAP" id="MF_01369_B">
    <property type="entry name" value="Ribosomal_uL23_B"/>
    <property type="match status" value="1"/>
</dbReference>
<dbReference type="InterPro" id="IPR012677">
    <property type="entry name" value="Nucleotide-bd_a/b_plait_sf"/>
</dbReference>
<dbReference type="InterPro" id="IPR013025">
    <property type="entry name" value="Ribosomal_uL23-like"/>
</dbReference>
<dbReference type="InterPro" id="IPR012678">
    <property type="entry name" value="Ribosomal_uL23/eL15/eS24_sf"/>
</dbReference>
<dbReference type="InterPro" id="IPR001014">
    <property type="entry name" value="Ribosomal_uL23_CS"/>
</dbReference>
<dbReference type="PANTHER" id="PTHR11620">
    <property type="entry name" value="60S RIBOSOMAL PROTEIN L23A"/>
    <property type="match status" value="1"/>
</dbReference>
<dbReference type="Pfam" id="PF00276">
    <property type="entry name" value="Ribosomal_L23"/>
    <property type="match status" value="1"/>
</dbReference>
<dbReference type="SUPFAM" id="SSF54189">
    <property type="entry name" value="Ribosomal proteins S24e, L23 and L15e"/>
    <property type="match status" value="1"/>
</dbReference>
<dbReference type="PROSITE" id="PS00050">
    <property type="entry name" value="RIBOSOMAL_L23"/>
    <property type="match status" value="1"/>
</dbReference>
<accession>O62961</accession>
<name>RK23_PICAB</name>
<reference key="1">
    <citation type="submission" date="1997-03" db="EMBL/GenBank/DDBJ databases">
        <title>Characterisation of a Norway spruce chloroplast DNA clone: complete nucleotide sequences of rpl23, rpl2, rps19, rpl22, rps3, trn I, pseudo-ndhC and a residual inverted repeat B.</title>
        <authorList>
            <person name="Kluemper S."/>
            <person name="Kanka S."/>
            <person name="Riesner D."/>
            <person name="Etscheid M."/>
        </authorList>
    </citation>
    <scope>NUCLEOTIDE SEQUENCE [GENOMIC DNA]</scope>
</reference>
<keyword id="KW-0150">Chloroplast</keyword>
<keyword id="KW-0934">Plastid</keyword>
<keyword id="KW-0687">Ribonucleoprotein</keyword>
<keyword id="KW-0689">Ribosomal protein</keyword>
<keyword id="KW-0694">RNA-binding</keyword>
<keyword id="KW-0699">rRNA-binding</keyword>
<geneLocation type="chloroplast"/>
<proteinExistence type="inferred from homology"/>
<protein>
    <recommendedName>
        <fullName evidence="2">Large ribosomal subunit protein uL23c</fullName>
    </recommendedName>
    <alternativeName>
        <fullName>50S ribosomal protein L23, chloroplastic</fullName>
    </alternativeName>
</protein>
<comment type="function">
    <text evidence="1">Binds to 23S rRNA.</text>
</comment>
<comment type="subunit">
    <text evidence="1">Part of the 50S ribosomal subunit.</text>
</comment>
<comment type="subcellular location">
    <subcellularLocation>
        <location>Plastid</location>
        <location>Chloroplast</location>
    </subcellularLocation>
</comment>
<comment type="similarity">
    <text evidence="2">Belongs to the universal ribosomal protein uL23 family.</text>
</comment>
<feature type="chain" id="PRO_0000129460" description="Large ribosomal subunit protein uL23c">
    <location>
        <begin position="1"/>
        <end position="91"/>
    </location>
</feature>